<sequence length="393" mass="43192">MGRLTSGVGTAALLVVAVGLRVVCAKYALADPSLKMADPNRFRGKNLPVLDQLTDPPGVKRVYHIQPSLEDPFQPPSIPITVYYAVLERACRSVLLHAPSEAPQIVRGASDEARKHTYNLTIAWYRMGDNCAIPITVMEYTECPYNKSLGVCPIRTQPRWSYYDSFSAVSEDNLGFLMHAPAFETAGTYLRLVKINDWTEITQFILEHRARASCKYALPLRIPPAACLTSKAYQQGVTVDSIGMLPRFIPENQRTVALYSLKIAGWHGPKPPYTSTLLPPELSDTTNATQPELVPEDPEDSALLEDPAGTVSSQIPPNWHIPSIQDVAPHHAPAAPSNPGLIIGALAGSTLAVLVIGGIAFWVRRRAQMAPKRLRLPHIRDDDAPPSHQPLFY</sequence>
<feature type="signal peptide" evidence="4">
    <location>
        <begin position="1"/>
        <end position="25"/>
    </location>
</feature>
<feature type="chain" id="PRO_0000385470" description="Envelope glycoprotein D">
    <location>
        <begin position="26"/>
        <end position="393"/>
    </location>
</feature>
<feature type="topological domain" description="Virion surface" evidence="4">
    <location>
        <begin position="26"/>
        <end position="340"/>
    </location>
</feature>
<feature type="transmembrane region" description="Helical" evidence="4">
    <location>
        <begin position="341"/>
        <end position="361"/>
    </location>
</feature>
<feature type="topological domain" description="Intravirion" evidence="4">
    <location>
        <begin position="362"/>
        <end position="393"/>
    </location>
</feature>
<feature type="region of interest" description="Interaction with TNFRSF14" evidence="1">
    <location>
        <begin position="25"/>
        <end position="57"/>
    </location>
</feature>
<feature type="region of interest" description="Profusion" evidence="2">
    <location>
        <begin position="261"/>
        <end position="305"/>
    </location>
</feature>
<feature type="region of interest" description="Disordered" evidence="5">
    <location>
        <begin position="274"/>
        <end position="301"/>
    </location>
</feature>
<feature type="compositionally biased region" description="Polar residues" evidence="5">
    <location>
        <begin position="274"/>
        <end position="290"/>
    </location>
</feature>
<feature type="binding site" evidence="1">
    <location>
        <position position="64"/>
    </location>
    <ligand>
        <name>Zn(2+)</name>
        <dbReference type="ChEBI" id="CHEBI:29105"/>
        <note>ligand shared between dimeric partners</note>
    </ligand>
</feature>
<feature type="binding site" evidence="1">
    <location>
        <position position="240"/>
    </location>
    <ligand>
        <name>Zn(2+)</name>
        <dbReference type="ChEBI" id="CHEBI:29105"/>
        <note>ligand shared between dimeric partners</note>
    </ligand>
</feature>
<feature type="glycosylation site" description="N-linked (GlcNAc...) asparagine; by host" evidence="4">
    <location>
        <position position="119"/>
    </location>
</feature>
<feature type="glycosylation site" description="N-linked (GlcNAc...) asparagine; by host" evidence="4">
    <location>
        <position position="146"/>
    </location>
</feature>
<feature type="glycosylation site" description="N-linked (GlcNAc...) asparagine; by host" evidence="4">
    <location>
        <position position="287"/>
    </location>
</feature>
<feature type="disulfide bond" evidence="1">
    <location>
        <begin position="91"/>
        <end position="214"/>
    </location>
</feature>
<feature type="disulfide bond" evidence="1">
    <location>
        <begin position="131"/>
        <end position="227"/>
    </location>
</feature>
<feature type="disulfide bond" evidence="1">
    <location>
        <begin position="143"/>
        <end position="152"/>
    </location>
</feature>
<feature type="strand" evidence="7">
    <location>
        <begin position="60"/>
        <end position="63"/>
    </location>
</feature>
<feature type="strand" evidence="7">
    <location>
        <begin position="65"/>
        <end position="68"/>
    </location>
</feature>
<feature type="strand" evidence="7">
    <location>
        <begin position="81"/>
        <end position="87"/>
    </location>
</feature>
<feature type="strand" evidence="7">
    <location>
        <begin position="92"/>
        <end position="96"/>
    </location>
</feature>
<feature type="helix" evidence="7">
    <location>
        <begin position="102"/>
        <end position="107"/>
    </location>
</feature>
<feature type="helix" evidence="7">
    <location>
        <begin position="113"/>
        <end position="115"/>
    </location>
</feature>
<feature type="strand" evidence="7">
    <location>
        <begin position="118"/>
        <end position="127"/>
    </location>
</feature>
<feature type="strand" evidence="7">
    <location>
        <begin position="132"/>
        <end position="143"/>
    </location>
</feature>
<feature type="strand" evidence="7">
    <location>
        <begin position="153"/>
        <end position="156"/>
    </location>
</feature>
<feature type="strand" evidence="7">
    <location>
        <begin position="159"/>
        <end position="162"/>
    </location>
</feature>
<feature type="turn" evidence="7">
    <location>
        <begin position="164"/>
        <end position="166"/>
    </location>
</feature>
<feature type="strand" evidence="7">
    <location>
        <begin position="167"/>
        <end position="169"/>
    </location>
</feature>
<feature type="strand" evidence="7">
    <location>
        <begin position="176"/>
        <end position="180"/>
    </location>
</feature>
<feature type="helix" evidence="7">
    <location>
        <begin position="183"/>
        <end position="185"/>
    </location>
</feature>
<feature type="strand" evidence="7">
    <location>
        <begin position="187"/>
        <end position="195"/>
    </location>
</feature>
<feature type="strand" evidence="7">
    <location>
        <begin position="198"/>
        <end position="212"/>
    </location>
</feature>
<feature type="helix" evidence="7">
    <location>
        <begin position="224"/>
        <end position="226"/>
    </location>
</feature>
<feature type="helix" evidence="7">
    <location>
        <begin position="230"/>
        <end position="236"/>
    </location>
</feature>
<feature type="helix" evidence="7">
    <location>
        <begin position="239"/>
        <end position="242"/>
    </location>
</feature>
<feature type="helix" evidence="7">
    <location>
        <begin position="250"/>
        <end position="263"/>
    </location>
</feature>
<proteinExistence type="evidence at protein level"/>
<reference key="1">
    <citation type="journal article" date="1987" name="J. Gen. Virol.">
        <title>DNA sequence and genetic content of the HindIII l region in the short unique component of the herpes simplex virus type 2 genome: identification of the gene encoding glycoprotein G, and evolutionary comparisons.</title>
        <authorList>
            <person name="McGeoch D.J."/>
            <person name="Moss H.W.M."/>
            <person name="McNab D."/>
            <person name="Frame M.C."/>
        </authorList>
    </citation>
    <scope>NUCLEOTIDE SEQUENCE [GENOMIC DNA]</scope>
</reference>
<reference key="2">
    <citation type="journal article" date="1998" name="J. Virol.">
        <title>The genome sequence of herpes simplex virus type 2.</title>
        <authorList>
            <person name="Dolan A."/>
            <person name="Jamieson F.E."/>
            <person name="Cunningham C."/>
            <person name="Barnett B.C."/>
            <person name="McGeoch D.J."/>
        </authorList>
    </citation>
    <scope>NUCLEOTIDE SEQUENCE [LARGE SCALE GENOMIC DNA]</scope>
</reference>
<dbReference type="EMBL" id="Z86099">
    <property type="protein sequence ID" value="CAB06713.1"/>
    <property type="molecule type" value="Genomic_DNA"/>
</dbReference>
<dbReference type="PIR" id="E43674">
    <property type="entry name" value="E43674"/>
</dbReference>
<dbReference type="RefSeq" id="YP_009137218.1">
    <property type="nucleotide sequence ID" value="NC_001798.2"/>
</dbReference>
<dbReference type="PDB" id="3W9E">
    <property type="method" value="X-ray"/>
    <property type="resolution" value="2.30 A"/>
    <property type="chains" value="C=1-300"/>
</dbReference>
<dbReference type="PDBsum" id="3W9E"/>
<dbReference type="SMR" id="Q69467"/>
<dbReference type="GlyCosmos" id="Q69467">
    <property type="glycosylation" value="3 sites, No reported glycans"/>
</dbReference>
<dbReference type="DNASU" id="1487358"/>
<dbReference type="GeneID" id="1487358"/>
<dbReference type="KEGG" id="vg:1487358"/>
<dbReference type="EvolutionaryTrace" id="Q69467"/>
<dbReference type="Proteomes" id="UP000001874">
    <property type="component" value="Segment"/>
</dbReference>
<dbReference type="GO" id="GO:0016020">
    <property type="term" value="C:membrane"/>
    <property type="evidence" value="ECO:0007669"/>
    <property type="project" value="UniProtKB-KW"/>
</dbReference>
<dbReference type="GO" id="GO:0019031">
    <property type="term" value="C:viral envelope"/>
    <property type="evidence" value="ECO:0007669"/>
    <property type="project" value="UniProtKB-KW"/>
</dbReference>
<dbReference type="GO" id="GO:0055036">
    <property type="term" value="C:virion membrane"/>
    <property type="evidence" value="ECO:0007669"/>
    <property type="project" value="UniProtKB-SubCell"/>
</dbReference>
<dbReference type="GO" id="GO:0046872">
    <property type="term" value="F:metal ion binding"/>
    <property type="evidence" value="ECO:0007669"/>
    <property type="project" value="UniProtKB-KW"/>
</dbReference>
<dbReference type="GO" id="GO:0098670">
    <property type="term" value="P:entry receptor-mediated virion attachment to host cell"/>
    <property type="evidence" value="ECO:0007669"/>
    <property type="project" value="UniProtKB-KW"/>
</dbReference>
<dbReference type="GO" id="GO:0046718">
    <property type="term" value="P:symbiont entry into host cell"/>
    <property type="evidence" value="ECO:0007669"/>
    <property type="project" value="UniProtKB-KW"/>
</dbReference>
<dbReference type="CDD" id="cd12087">
    <property type="entry name" value="TM_EGFR-like"/>
    <property type="match status" value="1"/>
</dbReference>
<dbReference type="Gene3D" id="2.70.230.10">
    <property type="match status" value="1"/>
</dbReference>
<dbReference type="InterPro" id="IPR002896">
    <property type="entry name" value="Herpes_glycop_dom"/>
</dbReference>
<dbReference type="InterPro" id="IPR036179">
    <property type="entry name" value="Ig-like_dom_sf"/>
</dbReference>
<dbReference type="Pfam" id="PF01537">
    <property type="entry name" value="Herpes_glycop_D"/>
    <property type="match status" value="1"/>
</dbReference>
<dbReference type="SUPFAM" id="SSF48726">
    <property type="entry name" value="Immunoglobulin"/>
    <property type="match status" value="1"/>
</dbReference>
<accession>Q69467</accession>
<accession>O12514</accession>
<comment type="function">
    <text evidence="2">Envelope glycoprotein that binds to the host cell entry receptors NECTIN1 and TNFRSF14/HVEM, promoting the virus entry into host cells. May trigger fusion with host membrane, by recruiting the fusion machinery composed of gB and gH/gL (By similarity).</text>
</comment>
<comment type="subunit">
    <text evidence="2 3">Homodimer (By similarity). Interacts with host receptor TNFRSF14. Interacts with host receptor NECTIN1. Interacts with host receptor NECTIN2. Interacts (via profusion domain) with gB; this interaction occurs in the absence of gH/gL. Interacts (via profusion domain) with gH/gL heterodimer; this interaction occurs in the absence of gB. Associates with the gB-gH/gL-gD complex. Interacts (via C-terminus) with UL11 tegument protein (By similarity).</text>
</comment>
<comment type="subcellular location">
    <subcellularLocation>
        <location evidence="2">Virion membrane</location>
        <topology evidence="2">Single-pass type I membrane protein</topology>
    </subcellularLocation>
    <text evidence="3">During virion morphogenesis, this protein probably accumulates in the endosomes and trans-Golgi where secondary envelopment occurs.</text>
</comment>
<comment type="similarity">
    <text evidence="6">Belongs to the herpesviridae glycoprotein D family.</text>
</comment>
<evidence type="ECO:0000250" key="1">
    <source>
        <dbReference type="UniProtKB" id="P57083"/>
    </source>
</evidence>
<evidence type="ECO:0000250" key="2">
    <source>
        <dbReference type="UniProtKB" id="Q05059"/>
    </source>
</evidence>
<evidence type="ECO:0000250" key="3">
    <source>
        <dbReference type="UniProtKB" id="Q69091"/>
    </source>
</evidence>
<evidence type="ECO:0000255" key="4"/>
<evidence type="ECO:0000256" key="5">
    <source>
        <dbReference type="SAM" id="MobiDB-lite"/>
    </source>
</evidence>
<evidence type="ECO:0000305" key="6"/>
<evidence type="ECO:0007829" key="7">
    <source>
        <dbReference type="PDB" id="3W9E"/>
    </source>
</evidence>
<protein>
    <recommendedName>
        <fullName>Envelope glycoprotein D</fullName>
        <shortName>gD</shortName>
    </recommendedName>
</protein>
<organism>
    <name type="scientific">Human herpesvirus 2 (strain HG52)</name>
    <name type="common">HHV-2</name>
    <name type="synonym">Human herpes simplex virus 2</name>
    <dbReference type="NCBI Taxonomy" id="10315"/>
    <lineage>
        <taxon>Viruses</taxon>
        <taxon>Duplodnaviria</taxon>
        <taxon>Heunggongvirae</taxon>
        <taxon>Peploviricota</taxon>
        <taxon>Herviviricetes</taxon>
        <taxon>Herpesvirales</taxon>
        <taxon>Orthoherpesviridae</taxon>
        <taxon>Alphaherpesvirinae</taxon>
        <taxon>Simplexvirus</taxon>
        <taxon>Simplexvirus humanalpha2</taxon>
        <taxon>Human herpesvirus 2</taxon>
    </lineage>
</organism>
<keyword id="KW-0002">3D-structure</keyword>
<keyword id="KW-1015">Disulfide bond</keyword>
<keyword id="KW-0325">Glycoprotein</keyword>
<keyword id="KW-0945">Host-virus interaction</keyword>
<keyword id="KW-0472">Membrane</keyword>
<keyword id="KW-0479">Metal-binding</keyword>
<keyword id="KW-1185">Reference proteome</keyword>
<keyword id="KW-0732">Signal</keyword>
<keyword id="KW-0812">Transmembrane</keyword>
<keyword id="KW-1133">Transmembrane helix</keyword>
<keyword id="KW-1161">Viral attachment to host cell</keyword>
<keyword id="KW-1234">Viral attachment to host entry receptor</keyword>
<keyword id="KW-0261">Viral envelope protein</keyword>
<keyword id="KW-0946">Virion</keyword>
<keyword id="KW-1160">Virus entry into host cell</keyword>
<keyword id="KW-0862">Zinc</keyword>
<gene>
    <name type="primary">gD</name>
    <name type="ORF">US6</name>
</gene>
<organismHost>
    <name type="scientific">Homo sapiens</name>
    <name type="common">Human</name>
    <dbReference type="NCBI Taxonomy" id="9606"/>
</organismHost>
<name>GD_HHV2H</name>